<feature type="chain" id="PRO_0000249776" description="Small COPII coat GTPase SAR1A">
    <location>
        <begin position="1"/>
        <end position="198"/>
    </location>
</feature>
<feature type="region of interest" description="Mediates recruitment to ER membranes" evidence="2">
    <location>
        <begin position="15"/>
        <end position="19"/>
    </location>
</feature>
<feature type="short sequence motif" description="STAR; SAR1-N-terminal activation recruitment. Required for the activation by PREB and subsequent recruitment to ER membrane" evidence="2">
    <location>
        <begin position="3"/>
        <end position="5"/>
    </location>
</feature>
<feature type="binding site" evidence="1">
    <location>
        <position position="34"/>
    </location>
    <ligand>
        <name>Mg(2+)</name>
        <dbReference type="ChEBI" id="CHEBI:18420"/>
    </ligand>
</feature>
<feature type="binding site" evidence="1">
    <location>
        <position position="35"/>
    </location>
    <ligand>
        <name>GDP</name>
        <dbReference type="ChEBI" id="CHEBI:58189"/>
    </ligand>
</feature>
<feature type="binding site" evidence="3">
    <location>
        <position position="35"/>
    </location>
    <ligand>
        <name>GTP</name>
        <dbReference type="ChEBI" id="CHEBI:37565"/>
    </ligand>
</feature>
<feature type="binding site" evidence="1">
    <location>
        <position position="36"/>
    </location>
    <ligand>
        <name>GDP</name>
        <dbReference type="ChEBI" id="CHEBI:58189"/>
    </ligand>
</feature>
<feature type="binding site" evidence="1">
    <location>
        <position position="37"/>
    </location>
    <ligand>
        <name>GDP</name>
        <dbReference type="ChEBI" id="CHEBI:58189"/>
    </ligand>
</feature>
<feature type="binding site" evidence="3">
    <location>
        <position position="37"/>
    </location>
    <ligand>
        <name>GTP</name>
        <dbReference type="ChEBI" id="CHEBI:37565"/>
    </ligand>
</feature>
<feature type="binding site" evidence="1">
    <location>
        <position position="38"/>
    </location>
    <ligand>
        <name>GDP</name>
        <dbReference type="ChEBI" id="CHEBI:58189"/>
    </ligand>
</feature>
<feature type="binding site" evidence="3">
    <location>
        <position position="38"/>
    </location>
    <ligand>
        <name>GTP</name>
        <dbReference type="ChEBI" id="CHEBI:37565"/>
    </ligand>
</feature>
<feature type="binding site" evidence="1">
    <location>
        <position position="39"/>
    </location>
    <ligand>
        <name>GDP</name>
        <dbReference type="ChEBI" id="CHEBI:58189"/>
    </ligand>
</feature>
<feature type="binding site" evidence="3">
    <location>
        <position position="39"/>
    </location>
    <ligand>
        <name>GTP</name>
        <dbReference type="ChEBI" id="CHEBI:37565"/>
    </ligand>
</feature>
<feature type="binding site" evidence="1">
    <location>
        <position position="40"/>
    </location>
    <ligand>
        <name>GDP</name>
        <dbReference type="ChEBI" id="CHEBI:58189"/>
    </ligand>
</feature>
<feature type="binding site" evidence="3">
    <location>
        <position position="40"/>
    </location>
    <ligand>
        <name>GTP</name>
        <dbReference type="ChEBI" id="CHEBI:37565"/>
    </ligand>
</feature>
<feature type="binding site" evidence="1">
    <location>
        <position position="75"/>
    </location>
    <ligand>
        <name>Mg(2+)</name>
        <dbReference type="ChEBI" id="CHEBI:18420"/>
    </ligand>
</feature>
<feature type="binding site" evidence="1">
    <location>
        <position position="134"/>
    </location>
    <ligand>
        <name>GDP</name>
        <dbReference type="ChEBI" id="CHEBI:58189"/>
    </ligand>
</feature>
<feature type="binding site" evidence="3">
    <location>
        <position position="134"/>
    </location>
    <ligand>
        <name>GTP</name>
        <dbReference type="ChEBI" id="CHEBI:37565"/>
    </ligand>
</feature>
<feature type="binding site" evidence="1">
    <location>
        <position position="135"/>
    </location>
    <ligand>
        <name>GDP</name>
        <dbReference type="ChEBI" id="CHEBI:58189"/>
    </ligand>
</feature>
<feature type="binding site" evidence="3">
    <location>
        <position position="135"/>
    </location>
    <ligand>
        <name>GTP</name>
        <dbReference type="ChEBI" id="CHEBI:37565"/>
    </ligand>
</feature>
<feature type="binding site" evidence="1">
    <location>
        <position position="137"/>
    </location>
    <ligand>
        <name>GDP</name>
        <dbReference type="ChEBI" id="CHEBI:58189"/>
    </ligand>
</feature>
<feature type="binding site" evidence="3">
    <location>
        <position position="137"/>
    </location>
    <ligand>
        <name>GTP</name>
        <dbReference type="ChEBI" id="CHEBI:37565"/>
    </ligand>
</feature>
<feature type="binding site" evidence="1">
    <location>
        <position position="180"/>
    </location>
    <ligand>
        <name>GDP</name>
        <dbReference type="ChEBI" id="CHEBI:58189"/>
    </ligand>
</feature>
<feature type="binding site" evidence="3">
    <location>
        <position position="180"/>
    </location>
    <ligand>
        <name>GTP</name>
        <dbReference type="ChEBI" id="CHEBI:37565"/>
    </ligand>
</feature>
<feature type="binding site" evidence="1">
    <location>
        <position position="181"/>
    </location>
    <ligand>
        <name>GDP</name>
        <dbReference type="ChEBI" id="CHEBI:58189"/>
    </ligand>
</feature>
<feature type="binding site" evidence="3">
    <location>
        <position position="181"/>
    </location>
    <ligand>
        <name>GTP</name>
        <dbReference type="ChEBI" id="CHEBI:37565"/>
    </ligand>
</feature>
<feature type="modified residue" description="Phosphothreonine" evidence="1">
    <location>
        <position position="139"/>
    </location>
</feature>
<accession>Q52NJ3</accession>
<keyword id="KW-0963">Cytoplasm</keyword>
<keyword id="KW-0256">Endoplasmic reticulum</keyword>
<keyword id="KW-0931">ER-Golgi transport</keyword>
<keyword id="KW-0333">Golgi apparatus</keyword>
<keyword id="KW-0342">GTP-binding</keyword>
<keyword id="KW-0378">Hydrolase</keyword>
<keyword id="KW-0458">Lysosome</keyword>
<keyword id="KW-0460">Magnesium</keyword>
<keyword id="KW-0472">Membrane</keyword>
<keyword id="KW-0479">Metal-binding</keyword>
<keyword id="KW-0547">Nucleotide-binding</keyword>
<keyword id="KW-0597">Phosphoprotein</keyword>
<keyword id="KW-0653">Protein transport</keyword>
<keyword id="KW-1185">Reference proteome</keyword>
<keyword id="KW-0813">Transport</keyword>
<organism>
    <name type="scientific">Sus scrofa</name>
    <name type="common">Pig</name>
    <dbReference type="NCBI Taxonomy" id="9823"/>
    <lineage>
        <taxon>Eukaryota</taxon>
        <taxon>Metazoa</taxon>
        <taxon>Chordata</taxon>
        <taxon>Craniata</taxon>
        <taxon>Vertebrata</taxon>
        <taxon>Euteleostomi</taxon>
        <taxon>Mammalia</taxon>
        <taxon>Eutheria</taxon>
        <taxon>Laurasiatheria</taxon>
        <taxon>Artiodactyla</taxon>
        <taxon>Suina</taxon>
        <taxon>Suidae</taxon>
        <taxon>Sus</taxon>
    </lineage>
</organism>
<reference key="1">
    <citation type="submission" date="2005-04" db="EMBL/GenBank/DDBJ databases">
        <authorList>
            <person name="Liu G.Y."/>
            <person name="Xiong Z.Y."/>
        </authorList>
    </citation>
    <scope>NUCLEOTIDE SEQUENCE [LARGE SCALE MRNA]</scope>
</reference>
<sequence>MSFIFEWIYNGFSSVLQFLGLYKKSGKLVFLGLDNAGKTTLLHMLKDDRLGQHVPTLHPTSEELTIAGMTFTTFDLGGHEQARRVWKNYLPAINGIVFLVDCADHPRLMESKVELNALMTDETISNVPILILGNKIDRTDAISEEKLREIFGLYGQTTGKGNVTLKELNARPMEVFMCSVLKRQGYGEGFRWLSQYID</sequence>
<proteinExistence type="evidence at transcript level"/>
<protein>
    <recommendedName>
        <fullName evidence="1">Small COPII coat GTPase SAR1A</fullName>
        <ecNumber evidence="1">3.6.5.2</ecNumber>
    </recommendedName>
</protein>
<name>SAR1A_PIG</name>
<comment type="function">
    <text evidence="1">Small GTPase that cycles between an active GTP-bound and an inactive GDP-bound state and mainly functions in vesicle-mediated endoplasmic reticulum (ER) to Golgi transport. The active GTP-bound form inserts into the endoplasmic reticulum membrane where it recruits the remainder of the coat protein complex II/COPII. The coat protein complex II assembling and polymerizing on endoplasmic reticulum membrane is responsible for both the sorting of cargos and the deformation and budding of membranes into vesicles destined to the Golgi. The GTPase activity of SAR1 by controlling the timing of COPII budding regulates the size of the formed vesicles and is important for cargo selection depending on their size. Together with SEC16A, forms the organized scaffold defining endoplasmic reticulum exit sites (ERES), some specific domains of the endoplasmic reticulum where COPII vesicles form. In addition to its role in vesicle trafficking, can also function as a leucine sensor regulating TORC1 signaling and more indirectly cellular metabolism, growth and survival. In absence of leucine, interacts with the GATOR2 complex via MIOS and inhibits TORC1 signaling. The binding of leucine abrogates the interaction with GATOR2 and the inhibition of the TORC1 signaling. This function is completely independent of the GTPase activity of SAR1B.</text>
</comment>
<comment type="catalytic activity">
    <reaction evidence="1">
        <text>GTP + H2O = GDP + phosphate + H(+)</text>
        <dbReference type="Rhea" id="RHEA:19669"/>
        <dbReference type="ChEBI" id="CHEBI:15377"/>
        <dbReference type="ChEBI" id="CHEBI:15378"/>
        <dbReference type="ChEBI" id="CHEBI:37565"/>
        <dbReference type="ChEBI" id="CHEBI:43474"/>
        <dbReference type="ChEBI" id="CHEBI:58189"/>
        <dbReference type="EC" id="3.6.5.2"/>
    </reaction>
    <physiologicalReaction direction="left-to-right" evidence="1">
        <dbReference type="Rhea" id="RHEA:19670"/>
    </physiologicalReaction>
</comment>
<comment type="activity regulation">
    <text evidence="1">Small GTPases activation is mediated by guanine exchange factors (GEF), while inactivation through hydrolysis of the bound GTP is stimulated by GTPase activating proteins (GAP). Activated by the guanine nucleotide exchange factor PREB/SEC12 that facilitates the loading of SAR1B with GTP.</text>
</comment>
<comment type="subunit">
    <text evidence="1">Homodimer; upon association with membrane. Part of the coat protein complex II/COPII, composed of SEC23/24 and SEC13/31 heterodimers, that it helps recruit and assemble on endoplasmic reticulum (ER) membranes at ER exit sites. Interacts with PREB; PREB acts as a guanine nucleotide exchange factor facilitating the activation of SAR1B by loading it with GTP. Interacts with B3GAT1. Interacts with MIOS; the interaction is direct, disrupted by the binding of leucine and mediates the interaction of SAR1A with the GATOR2 complex to negatively regulate the TORC1 signaling upon leucine deprivation.</text>
</comment>
<comment type="subcellular location">
    <subcellularLocation>
        <location evidence="1">Endoplasmic reticulum membrane</location>
        <topology evidence="1">Peripheral membrane protein</topology>
    </subcellularLocation>
    <subcellularLocation>
        <location evidence="1">Golgi apparatus</location>
        <location evidence="1">Golgi stack membrane</location>
        <topology evidence="1">Peripheral membrane protein</topology>
    </subcellularLocation>
    <subcellularLocation>
        <location evidence="1">Cytoplasm</location>
        <location evidence="1">Cytosol</location>
    </subcellularLocation>
    <subcellularLocation>
        <location evidence="1">Lysosome membrane</location>
    </subcellularLocation>
    <text evidence="1">Active at endoplasmic reticulum exit sites (ERES) where it inserts into the membrane and recruits the remainder of the coat protein complex II/COPII. Upon leucine deprivation, associates with lysosomal membranes to repress TORC1 signaling.</text>
</comment>
<comment type="similarity">
    <text evidence="4">Belongs to the small GTPase superfamily. SAR1 family.</text>
</comment>
<gene>
    <name evidence="1" type="primary">SAR1A</name>
</gene>
<dbReference type="EC" id="3.6.5.2" evidence="1"/>
<dbReference type="EMBL" id="AY996812">
    <property type="protein sequence ID" value="AAY17508.1"/>
    <property type="molecule type" value="mRNA"/>
</dbReference>
<dbReference type="RefSeq" id="NP_001026956.1">
    <property type="nucleotide sequence ID" value="NM_001031786.1"/>
</dbReference>
<dbReference type="RefSeq" id="XP_005657450.1">
    <property type="nucleotide sequence ID" value="XM_005657393.3"/>
</dbReference>
<dbReference type="RefSeq" id="XP_005657451.1">
    <property type="nucleotide sequence ID" value="XM_005657394.3"/>
</dbReference>
<dbReference type="SMR" id="Q52NJ3"/>
<dbReference type="FunCoup" id="Q52NJ3">
    <property type="interactions" value="2032"/>
</dbReference>
<dbReference type="STRING" id="9823.ENSSSCP00000039382"/>
<dbReference type="PaxDb" id="9823-ENSSSCP00000010938"/>
<dbReference type="PeptideAtlas" id="Q52NJ3"/>
<dbReference type="Ensembl" id="ENSSSCT00000048887.3">
    <property type="protein sequence ID" value="ENSSSCP00000039382.1"/>
    <property type="gene ID" value="ENSSSCG00000010260.4"/>
</dbReference>
<dbReference type="Ensembl" id="ENSSSCT00015011505.1">
    <property type="protein sequence ID" value="ENSSSCP00015004545.1"/>
    <property type="gene ID" value="ENSSSCG00015008721.1"/>
</dbReference>
<dbReference type="Ensembl" id="ENSSSCT00015011702.1">
    <property type="protein sequence ID" value="ENSSSCP00015004613.1"/>
    <property type="gene ID" value="ENSSSCG00015008721.1"/>
</dbReference>
<dbReference type="Ensembl" id="ENSSSCT00015011765.1">
    <property type="protein sequence ID" value="ENSSSCP00015004643.1"/>
    <property type="gene ID" value="ENSSSCG00015008721.1"/>
</dbReference>
<dbReference type="Ensembl" id="ENSSSCT00015011834.1">
    <property type="protein sequence ID" value="ENSSSCP00015004674.1"/>
    <property type="gene ID" value="ENSSSCG00015008721.1"/>
</dbReference>
<dbReference type="Ensembl" id="ENSSSCT00025102577.1">
    <property type="protein sequence ID" value="ENSSSCP00025045404.1"/>
    <property type="gene ID" value="ENSSSCG00025074388.1"/>
</dbReference>
<dbReference type="Ensembl" id="ENSSSCT00030096926.1">
    <property type="protein sequence ID" value="ENSSSCP00030044684.1"/>
    <property type="gene ID" value="ENSSSCG00030069190.1"/>
</dbReference>
<dbReference type="Ensembl" id="ENSSSCT00035038239.1">
    <property type="protein sequence ID" value="ENSSSCP00035015256.1"/>
    <property type="gene ID" value="ENSSSCG00035028884.1"/>
</dbReference>
<dbReference type="Ensembl" id="ENSSSCT00040037980.1">
    <property type="protein sequence ID" value="ENSSSCP00040015839.1"/>
    <property type="gene ID" value="ENSSSCG00040028216.1"/>
</dbReference>
<dbReference type="Ensembl" id="ENSSSCT00045023669.1">
    <property type="protein sequence ID" value="ENSSSCP00045016348.1"/>
    <property type="gene ID" value="ENSSSCG00045013863.1"/>
</dbReference>
<dbReference type="Ensembl" id="ENSSSCT00050053942.1">
    <property type="protein sequence ID" value="ENSSSCP00050022714.1"/>
    <property type="gene ID" value="ENSSSCG00050039932.1"/>
</dbReference>
<dbReference type="Ensembl" id="ENSSSCT00055061375.1">
    <property type="protein sequence ID" value="ENSSSCP00055049240.1"/>
    <property type="gene ID" value="ENSSSCG00055030759.1"/>
</dbReference>
<dbReference type="Ensembl" id="ENSSSCT00060081404.1">
    <property type="protein sequence ID" value="ENSSSCP00060035247.1"/>
    <property type="gene ID" value="ENSSSCG00060059655.1"/>
</dbReference>
<dbReference type="Ensembl" id="ENSSSCT00065099938.1">
    <property type="protein sequence ID" value="ENSSSCP00065043885.1"/>
    <property type="gene ID" value="ENSSSCG00065072673.1"/>
</dbReference>
<dbReference type="Ensembl" id="ENSSSCT00070016497.1">
    <property type="protein sequence ID" value="ENSSSCP00070013664.1"/>
    <property type="gene ID" value="ENSSSCG00070008532.1"/>
</dbReference>
<dbReference type="Ensembl" id="ENSSSCT00070016507.1">
    <property type="protein sequence ID" value="ENSSSCP00070013671.1"/>
    <property type="gene ID" value="ENSSSCG00070008532.1"/>
</dbReference>
<dbReference type="Ensembl" id="ENSSSCT00070016512.1">
    <property type="protein sequence ID" value="ENSSSCP00070013675.1"/>
    <property type="gene ID" value="ENSSSCG00070008532.1"/>
</dbReference>
<dbReference type="Ensembl" id="ENSSSCT00090029977">
    <property type="protein sequence ID" value="ENSSSCP00090018637"/>
    <property type="gene ID" value="ENSSSCG00090016974"/>
</dbReference>
<dbReference type="Ensembl" id="ENSSSCT00105065554">
    <property type="protein sequence ID" value="ENSSSCP00105046702"/>
    <property type="gene ID" value="ENSSSCG00105034366"/>
</dbReference>
<dbReference type="Ensembl" id="ENSSSCT00110019016">
    <property type="protein sequence ID" value="ENSSSCP00110012906"/>
    <property type="gene ID" value="ENSSSCG00110009865"/>
</dbReference>
<dbReference type="Ensembl" id="ENSSSCT00115027223">
    <property type="protein sequence ID" value="ENSSSCP00115025803"/>
    <property type="gene ID" value="ENSSSCG00115015606"/>
</dbReference>
<dbReference type="Ensembl" id="ENSSSCT00130018434">
    <property type="protein sequence ID" value="ENSSSCP00130012454"/>
    <property type="gene ID" value="ENSSSCG00130009859"/>
</dbReference>
<dbReference type="GeneID" id="595115"/>
<dbReference type="KEGG" id="ssc:595115"/>
<dbReference type="CTD" id="56681"/>
<dbReference type="VGNC" id="VGNC:92579">
    <property type="gene designation" value="SAR1A"/>
</dbReference>
<dbReference type="eggNOG" id="KOG0077">
    <property type="taxonomic scope" value="Eukaryota"/>
</dbReference>
<dbReference type="GeneTree" id="ENSGT00940000155276"/>
<dbReference type="HOGENOM" id="CLU_040729_6_0_1"/>
<dbReference type="InParanoid" id="Q52NJ3"/>
<dbReference type="OMA" id="GLWNKHG"/>
<dbReference type="OrthoDB" id="15478at2759"/>
<dbReference type="TreeFam" id="TF312890"/>
<dbReference type="Proteomes" id="UP000008227">
    <property type="component" value="Chromosome 14"/>
</dbReference>
<dbReference type="Proteomes" id="UP000314985">
    <property type="component" value="Chromosome 14"/>
</dbReference>
<dbReference type="Proteomes" id="UP000694570">
    <property type="component" value="Unplaced"/>
</dbReference>
<dbReference type="Proteomes" id="UP000694571">
    <property type="component" value="Unplaced"/>
</dbReference>
<dbReference type="Proteomes" id="UP000694720">
    <property type="component" value="Unplaced"/>
</dbReference>
<dbReference type="Proteomes" id="UP000694722">
    <property type="component" value="Unplaced"/>
</dbReference>
<dbReference type="Proteomes" id="UP000694723">
    <property type="component" value="Unplaced"/>
</dbReference>
<dbReference type="Proteomes" id="UP000694724">
    <property type="component" value="Unplaced"/>
</dbReference>
<dbReference type="Proteomes" id="UP000694725">
    <property type="component" value="Unplaced"/>
</dbReference>
<dbReference type="Proteomes" id="UP000694726">
    <property type="component" value="Unplaced"/>
</dbReference>
<dbReference type="Proteomes" id="UP000694727">
    <property type="component" value="Unplaced"/>
</dbReference>
<dbReference type="Proteomes" id="UP000694728">
    <property type="component" value="Unplaced"/>
</dbReference>
<dbReference type="Bgee" id="ENSSSCG00000010260">
    <property type="expression patterns" value="Expressed in granulosa cell and 46 other cell types or tissues"/>
</dbReference>
<dbReference type="ExpressionAtlas" id="Q52NJ3">
    <property type="expression patterns" value="baseline and differential"/>
</dbReference>
<dbReference type="GO" id="GO:0030127">
    <property type="term" value="C:COPII vesicle coat"/>
    <property type="evidence" value="ECO:0000250"/>
    <property type="project" value="UniProtKB"/>
</dbReference>
<dbReference type="GO" id="GO:0005829">
    <property type="term" value="C:cytosol"/>
    <property type="evidence" value="ECO:0007669"/>
    <property type="project" value="UniProtKB-SubCell"/>
</dbReference>
<dbReference type="GO" id="GO:0070971">
    <property type="term" value="C:endoplasmic reticulum exit site"/>
    <property type="evidence" value="ECO:0000250"/>
    <property type="project" value="UniProtKB"/>
</dbReference>
<dbReference type="GO" id="GO:0005789">
    <property type="term" value="C:endoplasmic reticulum membrane"/>
    <property type="evidence" value="ECO:0007669"/>
    <property type="project" value="UniProtKB-SubCell"/>
</dbReference>
<dbReference type="GO" id="GO:0032580">
    <property type="term" value="C:Golgi cisterna membrane"/>
    <property type="evidence" value="ECO:0007669"/>
    <property type="project" value="UniProtKB-SubCell"/>
</dbReference>
<dbReference type="GO" id="GO:0005765">
    <property type="term" value="C:lysosomal membrane"/>
    <property type="evidence" value="ECO:0007669"/>
    <property type="project" value="UniProtKB-SubCell"/>
</dbReference>
<dbReference type="GO" id="GO:0140785">
    <property type="term" value="F:amino acid sensor activity"/>
    <property type="evidence" value="ECO:0007669"/>
    <property type="project" value="Ensembl"/>
</dbReference>
<dbReference type="GO" id="GO:0003925">
    <property type="term" value="F:G protein activity"/>
    <property type="evidence" value="ECO:0000250"/>
    <property type="project" value="UniProtKB"/>
</dbReference>
<dbReference type="GO" id="GO:0005525">
    <property type="term" value="F:GTP binding"/>
    <property type="evidence" value="ECO:0007669"/>
    <property type="project" value="UniProtKB-KW"/>
</dbReference>
<dbReference type="GO" id="GO:0003924">
    <property type="term" value="F:GTPase activity"/>
    <property type="evidence" value="ECO:0000318"/>
    <property type="project" value="GO_Central"/>
</dbReference>
<dbReference type="GO" id="GO:0046872">
    <property type="term" value="F:metal ion binding"/>
    <property type="evidence" value="ECO:0007669"/>
    <property type="project" value="UniProtKB-KW"/>
</dbReference>
<dbReference type="GO" id="GO:1990253">
    <property type="term" value="P:cellular response to leucine starvation"/>
    <property type="evidence" value="ECO:0007669"/>
    <property type="project" value="Ensembl"/>
</dbReference>
<dbReference type="GO" id="GO:0048208">
    <property type="term" value="P:COPII vesicle coating"/>
    <property type="evidence" value="ECO:0000250"/>
    <property type="project" value="UniProtKB"/>
</dbReference>
<dbReference type="GO" id="GO:0090110">
    <property type="term" value="P:COPII-coated vesicle cargo loading"/>
    <property type="evidence" value="ECO:0000250"/>
    <property type="project" value="UniProtKB"/>
</dbReference>
<dbReference type="GO" id="GO:0006888">
    <property type="term" value="P:endoplasmic reticulum to Golgi vesicle-mediated transport"/>
    <property type="evidence" value="ECO:0000250"/>
    <property type="project" value="UniProtKB"/>
</dbReference>
<dbReference type="GO" id="GO:0006886">
    <property type="term" value="P:intracellular protein transport"/>
    <property type="evidence" value="ECO:0007669"/>
    <property type="project" value="InterPro"/>
</dbReference>
<dbReference type="GO" id="GO:0061024">
    <property type="term" value="P:membrane organization"/>
    <property type="evidence" value="ECO:0000318"/>
    <property type="project" value="GO_Central"/>
</dbReference>
<dbReference type="GO" id="GO:1904262">
    <property type="term" value="P:negative regulation of TORC1 signaling"/>
    <property type="evidence" value="ECO:0007669"/>
    <property type="project" value="Ensembl"/>
</dbReference>
<dbReference type="GO" id="GO:0003400">
    <property type="term" value="P:regulation of COPII vesicle coating"/>
    <property type="evidence" value="ECO:0000318"/>
    <property type="project" value="GO_Central"/>
</dbReference>
<dbReference type="GO" id="GO:0016050">
    <property type="term" value="P:vesicle organization"/>
    <property type="evidence" value="ECO:0000318"/>
    <property type="project" value="GO_Central"/>
</dbReference>
<dbReference type="CDD" id="cd00879">
    <property type="entry name" value="Sar1"/>
    <property type="match status" value="1"/>
</dbReference>
<dbReference type="FunFam" id="3.40.50.300:FF:000161">
    <property type="entry name" value="Small COPII coat GTPase"/>
    <property type="match status" value="1"/>
</dbReference>
<dbReference type="Gene3D" id="3.40.50.300">
    <property type="entry name" value="P-loop containing nucleotide triphosphate hydrolases"/>
    <property type="match status" value="1"/>
</dbReference>
<dbReference type="InterPro" id="IPR027417">
    <property type="entry name" value="P-loop_NTPase"/>
</dbReference>
<dbReference type="InterPro" id="IPR005225">
    <property type="entry name" value="Small_GTP-bd"/>
</dbReference>
<dbReference type="InterPro" id="IPR006689">
    <property type="entry name" value="Small_GTPase_ARF/SAR"/>
</dbReference>
<dbReference type="InterPro" id="IPR006687">
    <property type="entry name" value="Small_GTPase_SAR1"/>
</dbReference>
<dbReference type="NCBIfam" id="TIGR00231">
    <property type="entry name" value="small_GTP"/>
    <property type="match status" value="1"/>
</dbReference>
<dbReference type="PANTHER" id="PTHR45684">
    <property type="entry name" value="RE74312P"/>
    <property type="match status" value="1"/>
</dbReference>
<dbReference type="Pfam" id="PF00025">
    <property type="entry name" value="Arf"/>
    <property type="match status" value="1"/>
</dbReference>
<dbReference type="PRINTS" id="PR00328">
    <property type="entry name" value="SAR1GTPBP"/>
</dbReference>
<dbReference type="SMART" id="SM00177">
    <property type="entry name" value="ARF"/>
    <property type="match status" value="1"/>
</dbReference>
<dbReference type="SMART" id="SM00178">
    <property type="entry name" value="SAR"/>
    <property type="match status" value="1"/>
</dbReference>
<dbReference type="SUPFAM" id="SSF52540">
    <property type="entry name" value="P-loop containing nucleoside triphosphate hydrolases"/>
    <property type="match status" value="1"/>
</dbReference>
<dbReference type="PROSITE" id="PS51422">
    <property type="entry name" value="SAR1"/>
    <property type="match status" value="1"/>
</dbReference>
<evidence type="ECO:0000250" key="1">
    <source>
        <dbReference type="UniProtKB" id="Q9NR31"/>
    </source>
</evidence>
<evidence type="ECO:0000250" key="2">
    <source>
        <dbReference type="UniProtKB" id="Q9QVY3"/>
    </source>
</evidence>
<evidence type="ECO:0000250" key="3">
    <source>
        <dbReference type="UniProtKB" id="Q9Y6B6"/>
    </source>
</evidence>
<evidence type="ECO:0000305" key="4"/>